<gene>
    <name evidence="1" type="primary">rplD</name>
    <name type="ordered locus">BH0135</name>
</gene>
<accession>Q9Z9L3</accession>
<accession>Q9JPY5</accession>
<protein>
    <recommendedName>
        <fullName evidence="1">Large ribosomal subunit protein uL4</fullName>
    </recommendedName>
    <alternativeName>
        <fullName evidence="3">50S ribosomal protein L4</fullName>
    </alternativeName>
</protein>
<organism>
    <name type="scientific">Halalkalibacterium halodurans (strain ATCC BAA-125 / DSM 18197 / FERM 7344 / JCM 9153 / C-125)</name>
    <name type="common">Bacillus halodurans</name>
    <dbReference type="NCBI Taxonomy" id="272558"/>
    <lineage>
        <taxon>Bacteria</taxon>
        <taxon>Bacillati</taxon>
        <taxon>Bacillota</taxon>
        <taxon>Bacilli</taxon>
        <taxon>Bacillales</taxon>
        <taxon>Bacillaceae</taxon>
        <taxon>Halalkalibacterium (ex Joshi et al. 2022)</taxon>
    </lineage>
</organism>
<reference key="1">
    <citation type="journal article" date="1999" name="Biosci. Biotechnol. Biochem.">
        <title>Sequence analysis of a 32-kb region including the major ribosomal protein gene clusters from alkaliphilic Bacillus sp. strain C-125.</title>
        <authorList>
            <person name="Takami H."/>
            <person name="Takaki Y."/>
            <person name="Nakasone K."/>
            <person name="Hirama C."/>
            <person name="Inoue A."/>
            <person name="Horikoshi K."/>
        </authorList>
    </citation>
    <scope>NUCLEOTIDE SEQUENCE [GENOMIC DNA]</scope>
    <source>
        <strain>ATCC BAA-125 / DSM 18197 / FERM 7344 / JCM 9153 / C-125</strain>
    </source>
</reference>
<reference key="2">
    <citation type="journal article" date="2000" name="Nucleic Acids Res.">
        <title>Complete genome sequence of the alkaliphilic bacterium Bacillus halodurans and genomic sequence comparison with Bacillus subtilis.</title>
        <authorList>
            <person name="Takami H."/>
            <person name="Nakasone K."/>
            <person name="Takaki Y."/>
            <person name="Maeno G."/>
            <person name="Sasaki R."/>
            <person name="Masui N."/>
            <person name="Fuji F."/>
            <person name="Hirama C."/>
            <person name="Nakamura Y."/>
            <person name="Ogasawara N."/>
            <person name="Kuhara S."/>
            <person name="Horikoshi K."/>
        </authorList>
    </citation>
    <scope>NUCLEOTIDE SEQUENCE [LARGE SCALE GENOMIC DNA]</scope>
    <source>
        <strain>ATCC BAA-125 / DSM 18197 / FERM 7344 / JCM 9153 / C-125</strain>
    </source>
</reference>
<evidence type="ECO:0000255" key="1">
    <source>
        <dbReference type="HAMAP-Rule" id="MF_01328"/>
    </source>
</evidence>
<evidence type="ECO:0000256" key="2">
    <source>
        <dbReference type="SAM" id="MobiDB-lite"/>
    </source>
</evidence>
<evidence type="ECO:0000305" key="3"/>
<feature type="chain" id="PRO_0000129181" description="Large ribosomal subunit protein uL4">
    <location>
        <begin position="1"/>
        <end position="207"/>
    </location>
</feature>
<feature type="region of interest" description="Disordered" evidence="2">
    <location>
        <begin position="44"/>
        <end position="78"/>
    </location>
</feature>
<feature type="compositionally biased region" description="Basic residues" evidence="2">
    <location>
        <begin position="60"/>
        <end position="71"/>
    </location>
</feature>
<name>RL4_HALH5</name>
<dbReference type="EMBL" id="AB017508">
    <property type="protein sequence ID" value="BAA75272.1"/>
    <property type="molecule type" value="Genomic_DNA"/>
</dbReference>
<dbReference type="EMBL" id="BA000004">
    <property type="protein sequence ID" value="BAB03854.1"/>
    <property type="molecule type" value="Genomic_DNA"/>
</dbReference>
<dbReference type="PIR" id="T44384">
    <property type="entry name" value="T44384"/>
</dbReference>
<dbReference type="RefSeq" id="WP_010896318.1">
    <property type="nucleotide sequence ID" value="NC_002570.2"/>
</dbReference>
<dbReference type="SMR" id="Q9Z9L3"/>
<dbReference type="STRING" id="272558.gene:10725975"/>
<dbReference type="GeneID" id="87595676"/>
<dbReference type="KEGG" id="bha:BH0135"/>
<dbReference type="eggNOG" id="COG0088">
    <property type="taxonomic scope" value="Bacteria"/>
</dbReference>
<dbReference type="HOGENOM" id="CLU_041575_5_2_9"/>
<dbReference type="OrthoDB" id="9803201at2"/>
<dbReference type="Proteomes" id="UP000001258">
    <property type="component" value="Chromosome"/>
</dbReference>
<dbReference type="GO" id="GO:1990904">
    <property type="term" value="C:ribonucleoprotein complex"/>
    <property type="evidence" value="ECO:0007669"/>
    <property type="project" value="UniProtKB-KW"/>
</dbReference>
<dbReference type="GO" id="GO:0005840">
    <property type="term" value="C:ribosome"/>
    <property type="evidence" value="ECO:0007669"/>
    <property type="project" value="UniProtKB-KW"/>
</dbReference>
<dbReference type="GO" id="GO:0019843">
    <property type="term" value="F:rRNA binding"/>
    <property type="evidence" value="ECO:0007669"/>
    <property type="project" value="UniProtKB-UniRule"/>
</dbReference>
<dbReference type="GO" id="GO:0003735">
    <property type="term" value="F:structural constituent of ribosome"/>
    <property type="evidence" value="ECO:0007669"/>
    <property type="project" value="InterPro"/>
</dbReference>
<dbReference type="GO" id="GO:0006412">
    <property type="term" value="P:translation"/>
    <property type="evidence" value="ECO:0007669"/>
    <property type="project" value="UniProtKB-UniRule"/>
</dbReference>
<dbReference type="FunFam" id="3.40.1370.10:FF:000003">
    <property type="entry name" value="50S ribosomal protein L4"/>
    <property type="match status" value="1"/>
</dbReference>
<dbReference type="Gene3D" id="3.40.1370.10">
    <property type="match status" value="1"/>
</dbReference>
<dbReference type="HAMAP" id="MF_01328_B">
    <property type="entry name" value="Ribosomal_uL4_B"/>
    <property type="match status" value="1"/>
</dbReference>
<dbReference type="InterPro" id="IPR002136">
    <property type="entry name" value="Ribosomal_uL4"/>
</dbReference>
<dbReference type="InterPro" id="IPR013005">
    <property type="entry name" value="Ribosomal_uL4-like"/>
</dbReference>
<dbReference type="InterPro" id="IPR023574">
    <property type="entry name" value="Ribosomal_uL4_dom_sf"/>
</dbReference>
<dbReference type="NCBIfam" id="TIGR03953">
    <property type="entry name" value="rplD_bact"/>
    <property type="match status" value="1"/>
</dbReference>
<dbReference type="PANTHER" id="PTHR10746">
    <property type="entry name" value="50S RIBOSOMAL PROTEIN L4"/>
    <property type="match status" value="1"/>
</dbReference>
<dbReference type="PANTHER" id="PTHR10746:SF6">
    <property type="entry name" value="LARGE RIBOSOMAL SUBUNIT PROTEIN UL4M"/>
    <property type="match status" value="1"/>
</dbReference>
<dbReference type="Pfam" id="PF00573">
    <property type="entry name" value="Ribosomal_L4"/>
    <property type="match status" value="1"/>
</dbReference>
<dbReference type="SUPFAM" id="SSF52166">
    <property type="entry name" value="Ribosomal protein L4"/>
    <property type="match status" value="1"/>
</dbReference>
<proteinExistence type="inferred from homology"/>
<keyword id="KW-1185">Reference proteome</keyword>
<keyword id="KW-0687">Ribonucleoprotein</keyword>
<keyword id="KW-0689">Ribosomal protein</keyword>
<keyword id="KW-0694">RNA-binding</keyword>
<keyword id="KW-0699">rRNA-binding</keyword>
<sequence length="207" mass="22399">MPKVALYNQAGSQVGDIELSDAVFGIEPNENVLHDAVVMQQASLRQGTHKTKTRSEVRGGGRKPWRQKGTGRARQGSIRSPQWVGGGTVFGPTPRSYSYKLPKKVRRLAIKSALSSKVKAEEIVVLESLALEAPKTKEMASILSGLSVDRKALVVTADYNDNVALSARNIPGVTFVTAEGVNVLDVIKHDKLIITKDAVEKVEEVLA</sequence>
<comment type="function">
    <text evidence="1">One of the primary rRNA binding proteins, this protein initially binds near the 5'-end of the 23S rRNA. It is important during the early stages of 50S assembly. It makes multiple contacts with different domains of the 23S rRNA in the assembled 50S subunit and ribosome.</text>
</comment>
<comment type="function">
    <text evidence="1">Forms part of the polypeptide exit tunnel.</text>
</comment>
<comment type="subunit">
    <text evidence="1">Part of the 50S ribosomal subunit.</text>
</comment>
<comment type="similarity">
    <text evidence="1">Belongs to the universal ribosomal protein uL4 family.</text>
</comment>